<name>MNMA_RHOPB</name>
<sequence length="400" mass="43229">MLNSLDLEGRPQDTRIVVAMSGGVDSSTTAALLKSEGYDVVGITLQLYDHGAAIHRKGACCAGQDIHDARAVADRIGIPHYVLDYESRFQESVIDSFAASYATGETPVPCIECNRSIKFRDLLSTARELGASALATGHYVSSRRLADGSRALVCASDADRDQSYFLFATTRDQLDYLRFPLGDMTKPQTRELARKFGLSVADKHDSQDICFVPTGRYTDVVGRLKPNAMEPGEIVDLDGRVLGKHQGIVHFTVGQRRGLGIASTAPLYVLRLEPSTRRVVVGPREALRMDRIVLRDVNWIGDSSLDRAVGDGLELFVRVRSTRRPQPAWLRAQDGGYQVELVAGEDGVSPGQACVFYDAPAGQARVLGGGFIKSATPRAAGKSALRGAPASRPQVADARG</sequence>
<accession>Q21AM9</accession>
<feature type="chain" id="PRO_0000349773" description="tRNA-specific 2-thiouridylase MnmA">
    <location>
        <begin position="1"/>
        <end position="400"/>
    </location>
</feature>
<feature type="region of interest" description="Interaction with tRNA" evidence="1">
    <location>
        <begin position="160"/>
        <end position="162"/>
    </location>
</feature>
<feature type="active site" description="Nucleophile" evidence="1">
    <location>
        <position position="113"/>
    </location>
</feature>
<feature type="active site" description="Cysteine persulfide intermediate" evidence="1">
    <location>
        <position position="210"/>
    </location>
</feature>
<feature type="binding site" evidence="1">
    <location>
        <begin position="19"/>
        <end position="26"/>
    </location>
    <ligand>
        <name>ATP</name>
        <dbReference type="ChEBI" id="CHEBI:30616"/>
    </ligand>
</feature>
<feature type="binding site" evidence="1">
    <location>
        <position position="45"/>
    </location>
    <ligand>
        <name>ATP</name>
        <dbReference type="ChEBI" id="CHEBI:30616"/>
    </ligand>
</feature>
<feature type="binding site" evidence="1">
    <location>
        <position position="137"/>
    </location>
    <ligand>
        <name>ATP</name>
        <dbReference type="ChEBI" id="CHEBI:30616"/>
    </ligand>
</feature>
<feature type="site" description="Interaction with tRNA" evidence="1">
    <location>
        <position position="138"/>
    </location>
</feature>
<feature type="site" description="Interaction with tRNA" evidence="1">
    <location>
        <position position="352"/>
    </location>
</feature>
<feature type="disulfide bond" description="Alternate" evidence="1">
    <location>
        <begin position="113"/>
        <end position="210"/>
    </location>
</feature>
<organism>
    <name type="scientific">Rhodopseudomonas palustris (strain BisB18)</name>
    <dbReference type="NCBI Taxonomy" id="316056"/>
    <lineage>
        <taxon>Bacteria</taxon>
        <taxon>Pseudomonadati</taxon>
        <taxon>Pseudomonadota</taxon>
        <taxon>Alphaproteobacteria</taxon>
        <taxon>Hyphomicrobiales</taxon>
        <taxon>Nitrobacteraceae</taxon>
        <taxon>Rhodopseudomonas</taxon>
    </lineage>
</organism>
<keyword id="KW-0067">ATP-binding</keyword>
<keyword id="KW-0963">Cytoplasm</keyword>
<keyword id="KW-1015">Disulfide bond</keyword>
<keyword id="KW-0547">Nucleotide-binding</keyword>
<keyword id="KW-0694">RNA-binding</keyword>
<keyword id="KW-0808">Transferase</keyword>
<keyword id="KW-0819">tRNA processing</keyword>
<keyword id="KW-0820">tRNA-binding</keyword>
<evidence type="ECO:0000255" key="1">
    <source>
        <dbReference type="HAMAP-Rule" id="MF_00144"/>
    </source>
</evidence>
<evidence type="ECO:0000305" key="2"/>
<reference key="1">
    <citation type="submission" date="2006-03" db="EMBL/GenBank/DDBJ databases">
        <title>Complete sequence of Rhodopseudomonas palustris BisB18.</title>
        <authorList>
            <consortium name="US DOE Joint Genome Institute"/>
            <person name="Copeland A."/>
            <person name="Lucas S."/>
            <person name="Lapidus A."/>
            <person name="Barry K."/>
            <person name="Detter J.C."/>
            <person name="Glavina del Rio T."/>
            <person name="Hammon N."/>
            <person name="Israni S."/>
            <person name="Dalin E."/>
            <person name="Tice H."/>
            <person name="Pitluck S."/>
            <person name="Chain P."/>
            <person name="Malfatti S."/>
            <person name="Shin M."/>
            <person name="Vergez L."/>
            <person name="Schmutz J."/>
            <person name="Larimer F."/>
            <person name="Land M."/>
            <person name="Hauser L."/>
            <person name="Pelletier D.A."/>
            <person name="Kyrpides N."/>
            <person name="Anderson I."/>
            <person name="Oda Y."/>
            <person name="Harwood C.S."/>
            <person name="Richardson P."/>
        </authorList>
    </citation>
    <scope>NUCLEOTIDE SEQUENCE [LARGE SCALE GENOMIC DNA]</scope>
    <source>
        <strain>BisB18</strain>
    </source>
</reference>
<protein>
    <recommendedName>
        <fullName evidence="1">tRNA-specific 2-thiouridylase MnmA</fullName>
        <ecNumber evidence="1">2.8.1.13</ecNumber>
    </recommendedName>
</protein>
<gene>
    <name evidence="1" type="primary">mnmA</name>
    <name type="ordered locus">RPC_0987</name>
</gene>
<comment type="function">
    <text evidence="1">Catalyzes the 2-thiolation of uridine at the wobble position (U34) of tRNA, leading to the formation of s(2)U34.</text>
</comment>
<comment type="catalytic activity">
    <reaction evidence="1">
        <text>S-sulfanyl-L-cysteinyl-[protein] + uridine(34) in tRNA + AH2 + ATP = 2-thiouridine(34) in tRNA + L-cysteinyl-[protein] + A + AMP + diphosphate + H(+)</text>
        <dbReference type="Rhea" id="RHEA:47032"/>
        <dbReference type="Rhea" id="RHEA-COMP:10131"/>
        <dbReference type="Rhea" id="RHEA-COMP:11726"/>
        <dbReference type="Rhea" id="RHEA-COMP:11727"/>
        <dbReference type="Rhea" id="RHEA-COMP:11728"/>
        <dbReference type="ChEBI" id="CHEBI:13193"/>
        <dbReference type="ChEBI" id="CHEBI:15378"/>
        <dbReference type="ChEBI" id="CHEBI:17499"/>
        <dbReference type="ChEBI" id="CHEBI:29950"/>
        <dbReference type="ChEBI" id="CHEBI:30616"/>
        <dbReference type="ChEBI" id="CHEBI:33019"/>
        <dbReference type="ChEBI" id="CHEBI:61963"/>
        <dbReference type="ChEBI" id="CHEBI:65315"/>
        <dbReference type="ChEBI" id="CHEBI:87170"/>
        <dbReference type="ChEBI" id="CHEBI:456215"/>
        <dbReference type="EC" id="2.8.1.13"/>
    </reaction>
</comment>
<comment type="subcellular location">
    <subcellularLocation>
        <location evidence="1">Cytoplasm</location>
    </subcellularLocation>
</comment>
<comment type="similarity">
    <text evidence="1">Belongs to the MnmA/TRMU family.</text>
</comment>
<comment type="sequence caution" evidence="2">
    <conflict type="erroneous initiation">
        <sequence resource="EMBL-CDS" id="ABD86557"/>
    </conflict>
</comment>
<dbReference type="EC" id="2.8.1.13" evidence="1"/>
<dbReference type="EMBL" id="CP000301">
    <property type="protein sequence ID" value="ABD86557.1"/>
    <property type="status" value="ALT_INIT"/>
    <property type="molecule type" value="Genomic_DNA"/>
</dbReference>
<dbReference type="SMR" id="Q21AM9"/>
<dbReference type="STRING" id="316056.RPC_0987"/>
<dbReference type="KEGG" id="rpc:RPC_0987"/>
<dbReference type="eggNOG" id="COG0482">
    <property type="taxonomic scope" value="Bacteria"/>
</dbReference>
<dbReference type="HOGENOM" id="CLU_035188_0_1_5"/>
<dbReference type="OrthoDB" id="9800696at2"/>
<dbReference type="GO" id="GO:0005737">
    <property type="term" value="C:cytoplasm"/>
    <property type="evidence" value="ECO:0007669"/>
    <property type="project" value="UniProtKB-SubCell"/>
</dbReference>
<dbReference type="GO" id="GO:0005524">
    <property type="term" value="F:ATP binding"/>
    <property type="evidence" value="ECO:0007669"/>
    <property type="project" value="UniProtKB-KW"/>
</dbReference>
<dbReference type="GO" id="GO:0000049">
    <property type="term" value="F:tRNA binding"/>
    <property type="evidence" value="ECO:0007669"/>
    <property type="project" value="UniProtKB-KW"/>
</dbReference>
<dbReference type="GO" id="GO:0103016">
    <property type="term" value="F:tRNA-uridine 2-sulfurtransferase activity"/>
    <property type="evidence" value="ECO:0007669"/>
    <property type="project" value="UniProtKB-EC"/>
</dbReference>
<dbReference type="GO" id="GO:0002143">
    <property type="term" value="P:tRNA wobble position uridine thiolation"/>
    <property type="evidence" value="ECO:0007669"/>
    <property type="project" value="TreeGrafter"/>
</dbReference>
<dbReference type="CDD" id="cd01998">
    <property type="entry name" value="MnmA_TRMU-like"/>
    <property type="match status" value="1"/>
</dbReference>
<dbReference type="FunFam" id="2.30.30.280:FF:000001">
    <property type="entry name" value="tRNA-specific 2-thiouridylase MnmA"/>
    <property type="match status" value="1"/>
</dbReference>
<dbReference type="FunFam" id="3.40.50.620:FF:000115">
    <property type="entry name" value="tRNA-specific 2-thiouridylase MnmA"/>
    <property type="match status" value="1"/>
</dbReference>
<dbReference type="Gene3D" id="2.30.30.280">
    <property type="entry name" value="Adenine nucleotide alpha hydrolases-like domains"/>
    <property type="match status" value="1"/>
</dbReference>
<dbReference type="Gene3D" id="3.40.50.620">
    <property type="entry name" value="HUPs"/>
    <property type="match status" value="1"/>
</dbReference>
<dbReference type="Gene3D" id="2.40.30.10">
    <property type="entry name" value="Translation factors"/>
    <property type="match status" value="1"/>
</dbReference>
<dbReference type="HAMAP" id="MF_00144">
    <property type="entry name" value="tRNA_thiouridyl_MnmA"/>
    <property type="match status" value="1"/>
</dbReference>
<dbReference type="InterPro" id="IPR004506">
    <property type="entry name" value="MnmA-like"/>
</dbReference>
<dbReference type="InterPro" id="IPR046885">
    <property type="entry name" value="MnmA-like_C"/>
</dbReference>
<dbReference type="InterPro" id="IPR046884">
    <property type="entry name" value="MnmA-like_central"/>
</dbReference>
<dbReference type="InterPro" id="IPR023382">
    <property type="entry name" value="MnmA-like_central_sf"/>
</dbReference>
<dbReference type="InterPro" id="IPR014729">
    <property type="entry name" value="Rossmann-like_a/b/a_fold"/>
</dbReference>
<dbReference type="NCBIfam" id="NF001138">
    <property type="entry name" value="PRK00143.1"/>
    <property type="match status" value="1"/>
</dbReference>
<dbReference type="NCBIfam" id="TIGR00420">
    <property type="entry name" value="trmU"/>
    <property type="match status" value="1"/>
</dbReference>
<dbReference type="PANTHER" id="PTHR11933:SF5">
    <property type="entry name" value="MITOCHONDRIAL TRNA-SPECIFIC 2-THIOURIDYLASE 1"/>
    <property type="match status" value="1"/>
</dbReference>
<dbReference type="PANTHER" id="PTHR11933">
    <property type="entry name" value="TRNA 5-METHYLAMINOMETHYL-2-THIOURIDYLATE -METHYLTRANSFERASE"/>
    <property type="match status" value="1"/>
</dbReference>
<dbReference type="Pfam" id="PF03054">
    <property type="entry name" value="tRNA_Me_trans"/>
    <property type="match status" value="1"/>
</dbReference>
<dbReference type="Pfam" id="PF20258">
    <property type="entry name" value="tRNA_Me_trans_C"/>
    <property type="match status" value="1"/>
</dbReference>
<dbReference type="Pfam" id="PF20259">
    <property type="entry name" value="tRNA_Me_trans_M"/>
    <property type="match status" value="1"/>
</dbReference>
<dbReference type="SUPFAM" id="SSF52402">
    <property type="entry name" value="Adenine nucleotide alpha hydrolases-like"/>
    <property type="match status" value="1"/>
</dbReference>
<proteinExistence type="inferred from homology"/>